<organism>
    <name type="scientific">Brucella melitensis biotype 1 (strain ATCC 23456 / CCUG 17765 / NCTC 10094 / 16M)</name>
    <dbReference type="NCBI Taxonomy" id="224914"/>
    <lineage>
        <taxon>Bacteria</taxon>
        <taxon>Pseudomonadati</taxon>
        <taxon>Pseudomonadota</taxon>
        <taxon>Alphaproteobacteria</taxon>
        <taxon>Hyphomicrobiales</taxon>
        <taxon>Brucellaceae</taxon>
        <taxon>Brucella/Ochrobactrum group</taxon>
        <taxon>Brucella</taxon>
    </lineage>
</organism>
<reference key="1">
    <citation type="journal article" date="2002" name="Proc. Natl. Acad. Sci. U.S.A.">
        <title>The genome sequence of the facultative intracellular pathogen Brucella melitensis.</title>
        <authorList>
            <person name="DelVecchio V.G."/>
            <person name="Kapatral V."/>
            <person name="Redkar R.J."/>
            <person name="Patra G."/>
            <person name="Mujer C."/>
            <person name="Los T."/>
            <person name="Ivanova N."/>
            <person name="Anderson I."/>
            <person name="Bhattacharyya A."/>
            <person name="Lykidis A."/>
            <person name="Reznik G."/>
            <person name="Jablonski L."/>
            <person name="Larsen N."/>
            <person name="D'Souza M."/>
            <person name="Bernal A."/>
            <person name="Mazur M."/>
            <person name="Goltsman E."/>
            <person name="Selkov E."/>
            <person name="Elzer P.H."/>
            <person name="Hagius S."/>
            <person name="O'Callaghan D."/>
            <person name="Letesson J.-J."/>
            <person name="Haselkorn R."/>
            <person name="Kyrpides N.C."/>
            <person name="Overbeek R."/>
        </authorList>
    </citation>
    <scope>NUCLEOTIDE SEQUENCE [LARGE SCALE GENOMIC DNA]</scope>
    <source>
        <strain>ATCC 23456 / CCUG 17765 / NCTC 10094 / 16M</strain>
    </source>
</reference>
<accession>P0A326</accession>
<accession>Q59170</accession>
<name>CATA_BRUME</name>
<feature type="initiator methionine" description="Removed" evidence="1">
    <location>
        <position position="1"/>
    </location>
</feature>
<feature type="chain" id="PRO_0000084981" description="Catalase">
    <location>
        <begin position="2"/>
        <end position="499"/>
    </location>
</feature>
<feature type="region of interest" description="Disordered" evidence="2">
    <location>
        <begin position="1"/>
        <end position="25"/>
    </location>
</feature>
<feature type="compositionally biased region" description="Polar residues" evidence="2">
    <location>
        <begin position="7"/>
        <end position="23"/>
    </location>
</feature>
<feature type="active site" evidence="1">
    <location>
        <position position="55"/>
    </location>
</feature>
<feature type="active site" evidence="1">
    <location>
        <position position="127"/>
    </location>
</feature>
<feature type="binding site" description="axial binding residue" evidence="1">
    <location>
        <position position="337"/>
    </location>
    <ligand>
        <name>heme</name>
        <dbReference type="ChEBI" id="CHEBI:30413"/>
    </ligand>
    <ligandPart>
        <name>Fe</name>
        <dbReference type="ChEBI" id="CHEBI:18248"/>
    </ligandPart>
</feature>
<dbReference type="EC" id="1.11.1.6"/>
<dbReference type="EMBL" id="AE008918">
    <property type="protein sequence ID" value="AAL54135.1"/>
    <property type="status" value="ALT_INIT"/>
    <property type="molecule type" value="Genomic_DNA"/>
</dbReference>
<dbReference type="PIR" id="AD3621">
    <property type="entry name" value="AD3621"/>
</dbReference>
<dbReference type="RefSeq" id="WP_002966234.1">
    <property type="nucleotide sequence ID" value="NZ_GG703779.1"/>
</dbReference>
<dbReference type="SMR" id="P0A326"/>
<dbReference type="GeneID" id="97535490"/>
<dbReference type="KEGG" id="bme:BMEII0893"/>
<dbReference type="KEGG" id="bmel:DK63_2355"/>
<dbReference type="PATRIC" id="fig|224914.52.peg.2468"/>
<dbReference type="eggNOG" id="COG0753">
    <property type="taxonomic scope" value="Bacteria"/>
</dbReference>
<dbReference type="Proteomes" id="UP000000419">
    <property type="component" value="Chromosome II"/>
</dbReference>
<dbReference type="GO" id="GO:0005737">
    <property type="term" value="C:cytoplasm"/>
    <property type="evidence" value="ECO:0007669"/>
    <property type="project" value="TreeGrafter"/>
</dbReference>
<dbReference type="GO" id="GO:0042597">
    <property type="term" value="C:periplasmic space"/>
    <property type="evidence" value="ECO:0007669"/>
    <property type="project" value="UniProtKB-SubCell"/>
</dbReference>
<dbReference type="GO" id="GO:0004096">
    <property type="term" value="F:catalase activity"/>
    <property type="evidence" value="ECO:0007669"/>
    <property type="project" value="UniProtKB-EC"/>
</dbReference>
<dbReference type="GO" id="GO:0020037">
    <property type="term" value="F:heme binding"/>
    <property type="evidence" value="ECO:0007669"/>
    <property type="project" value="InterPro"/>
</dbReference>
<dbReference type="GO" id="GO:0046872">
    <property type="term" value="F:metal ion binding"/>
    <property type="evidence" value="ECO:0007669"/>
    <property type="project" value="UniProtKB-KW"/>
</dbReference>
<dbReference type="GO" id="GO:0042744">
    <property type="term" value="P:hydrogen peroxide catabolic process"/>
    <property type="evidence" value="ECO:0007669"/>
    <property type="project" value="UniProtKB-KW"/>
</dbReference>
<dbReference type="GO" id="GO:0042542">
    <property type="term" value="P:response to hydrogen peroxide"/>
    <property type="evidence" value="ECO:0007669"/>
    <property type="project" value="TreeGrafter"/>
</dbReference>
<dbReference type="CDD" id="cd08156">
    <property type="entry name" value="catalase_clade_3"/>
    <property type="match status" value="1"/>
</dbReference>
<dbReference type="FunFam" id="2.40.180.10:FF:000001">
    <property type="entry name" value="Catalase"/>
    <property type="match status" value="1"/>
</dbReference>
<dbReference type="Gene3D" id="2.40.180.10">
    <property type="entry name" value="Catalase core domain"/>
    <property type="match status" value="1"/>
</dbReference>
<dbReference type="InterPro" id="IPR018028">
    <property type="entry name" value="Catalase"/>
</dbReference>
<dbReference type="InterPro" id="IPR040333">
    <property type="entry name" value="Catalase_3"/>
</dbReference>
<dbReference type="InterPro" id="IPR024711">
    <property type="entry name" value="Catalase_clade1/3"/>
</dbReference>
<dbReference type="InterPro" id="IPR011614">
    <property type="entry name" value="Catalase_core"/>
</dbReference>
<dbReference type="InterPro" id="IPR002226">
    <property type="entry name" value="Catalase_haem_BS"/>
</dbReference>
<dbReference type="InterPro" id="IPR010582">
    <property type="entry name" value="Catalase_immune_responsive"/>
</dbReference>
<dbReference type="InterPro" id="IPR020835">
    <property type="entry name" value="Catalase_sf"/>
</dbReference>
<dbReference type="PANTHER" id="PTHR11465">
    <property type="entry name" value="CATALASE"/>
    <property type="match status" value="1"/>
</dbReference>
<dbReference type="PANTHER" id="PTHR11465:SF61">
    <property type="entry name" value="CATALASE"/>
    <property type="match status" value="1"/>
</dbReference>
<dbReference type="Pfam" id="PF00199">
    <property type="entry name" value="Catalase"/>
    <property type="match status" value="1"/>
</dbReference>
<dbReference type="Pfam" id="PF06628">
    <property type="entry name" value="Catalase-rel"/>
    <property type="match status" value="1"/>
</dbReference>
<dbReference type="PIRSF" id="PIRSF038928">
    <property type="entry name" value="Catalase_clade1-3"/>
    <property type="match status" value="1"/>
</dbReference>
<dbReference type="PRINTS" id="PR00067">
    <property type="entry name" value="CATALASE"/>
</dbReference>
<dbReference type="SMART" id="SM01060">
    <property type="entry name" value="Catalase"/>
    <property type="match status" value="1"/>
</dbReference>
<dbReference type="SUPFAM" id="SSF56634">
    <property type="entry name" value="Heme-dependent catalase-like"/>
    <property type="match status" value="1"/>
</dbReference>
<dbReference type="PROSITE" id="PS00437">
    <property type="entry name" value="CATALASE_1"/>
    <property type="match status" value="1"/>
</dbReference>
<dbReference type="PROSITE" id="PS51402">
    <property type="entry name" value="CATALASE_3"/>
    <property type="match status" value="1"/>
</dbReference>
<comment type="function">
    <text>Decomposes hydrogen peroxide into water and oxygen; serves to protect cells from the toxic effects of hydrogen peroxide.</text>
</comment>
<comment type="catalytic activity">
    <reaction>
        <text>2 H2O2 = O2 + 2 H2O</text>
        <dbReference type="Rhea" id="RHEA:20309"/>
        <dbReference type="ChEBI" id="CHEBI:15377"/>
        <dbReference type="ChEBI" id="CHEBI:15379"/>
        <dbReference type="ChEBI" id="CHEBI:16240"/>
        <dbReference type="EC" id="1.11.1.6"/>
    </reaction>
</comment>
<comment type="cofactor">
    <cofactor>
        <name>heme</name>
        <dbReference type="ChEBI" id="CHEBI:30413"/>
    </cofactor>
</comment>
<comment type="subunit">
    <text>Homotetramer.</text>
</comment>
<comment type="subcellular location">
    <subcellularLocation>
        <location>Periplasm</location>
    </subcellularLocation>
</comment>
<comment type="similarity">
    <text evidence="3">Belongs to the catalase family.</text>
</comment>
<comment type="sequence caution" evidence="3">
    <conflict type="erroneous initiation">
        <sequence resource="EMBL-CDS" id="AAL54135"/>
    </conflict>
</comment>
<gene>
    <name type="primary">katA</name>
    <name type="ordered locus">BMEII0893</name>
</gene>
<keyword id="KW-0349">Heme</keyword>
<keyword id="KW-0376">Hydrogen peroxide</keyword>
<keyword id="KW-0408">Iron</keyword>
<keyword id="KW-0479">Metal-binding</keyword>
<keyword id="KW-0560">Oxidoreductase</keyword>
<keyword id="KW-0574">Periplasm</keyword>
<keyword id="KW-0575">Peroxidase</keyword>
<evidence type="ECO:0000250" key="1"/>
<evidence type="ECO:0000256" key="2">
    <source>
        <dbReference type="SAM" id="MobiDB-lite"/>
    </source>
</evidence>
<evidence type="ECO:0000305" key="3"/>
<proteinExistence type="inferred from homology"/>
<sequence>MTDRPIMTTSAGAPIPDNQNSLTAGERGPILMQDYQLIEKLSHQNRERIPERAVHAKGWGAYGTLTITGDISRYTKAKVLQPGAQTPMLARFSTVAGELGAADAERDVRGFALKFYTQEGNWDLVGNNTPVFFVRDPLKFPDFIHTQKRHPRTHLRSATAMWDFWSLSPESLHQVTILMSDRGLPTDVRHINGYGSHTYSFWNDAGERYWVKFHFKTMQGHKHWTNAEAEQVIGRTRESTQEDLFSAIENGEFPKWKVQVQIMPELDADKTPYNPFDLTKVWPHADYPPIDIGVMELNRNPENYFTEVENAAFSPSNIVPGIGFSPDKMLQARIFSYADAHRHRLGTHYESIPVNQPKCPVHHYHRDGQMNVYGGIKTGNPDAYYEPNSFNGPVEQPSAKEPPLCISGNADRYNHRIGNDDYSQPRALFNLFDAAQKQRLFSNIAAAMKGVPGFIVERQLGHFKLIHPEYEAGVRKALKDAHGYDANTIALNEKITAAE</sequence>
<protein>
    <recommendedName>
        <fullName>Catalase</fullName>
        <ecNumber>1.11.1.6</ecNumber>
    </recommendedName>
</protein>